<accession>Q5BGH1</accession>
<accession>C8VTS9</accession>
<comment type="function">
    <text evidence="1">RNA-binding component of the eukaryotic translation initiation factor 3 (eIF-3) complex, which is involved in protein synthesis of a specialized repertoire of mRNAs and, together with other initiation factors, stimulates binding of mRNA and methionyl-tRNAi to the 40S ribosome. The eIF-3 complex specifically targets and initiates translation of a subset of mRNAs involved in cell proliferation.</text>
</comment>
<comment type="subunit">
    <text evidence="1">Component of the eukaryotic translation initiation factor 3 (eIF-3) complex.</text>
</comment>
<comment type="subcellular location">
    <subcellularLocation>
        <location evidence="1">Cytoplasm</location>
    </subcellularLocation>
</comment>
<comment type="similarity">
    <text evidence="1">Belongs to the eIF-3 subunit B family.</text>
</comment>
<organism>
    <name type="scientific">Emericella nidulans (strain FGSC A4 / ATCC 38163 / CBS 112.46 / NRRL 194 / M139)</name>
    <name type="common">Aspergillus nidulans</name>
    <dbReference type="NCBI Taxonomy" id="227321"/>
    <lineage>
        <taxon>Eukaryota</taxon>
        <taxon>Fungi</taxon>
        <taxon>Dikarya</taxon>
        <taxon>Ascomycota</taxon>
        <taxon>Pezizomycotina</taxon>
        <taxon>Eurotiomycetes</taxon>
        <taxon>Eurotiomycetidae</taxon>
        <taxon>Eurotiales</taxon>
        <taxon>Aspergillaceae</taxon>
        <taxon>Aspergillus</taxon>
        <taxon>Aspergillus subgen. Nidulantes</taxon>
    </lineage>
</organism>
<keyword id="KW-0963">Cytoplasm</keyword>
<keyword id="KW-0396">Initiation factor</keyword>
<keyword id="KW-0648">Protein biosynthesis</keyword>
<keyword id="KW-1185">Reference proteome</keyword>
<keyword id="KW-0677">Repeat</keyword>
<keyword id="KW-0694">RNA-binding</keyword>
<keyword id="KW-0853">WD repeat</keyword>
<protein>
    <recommendedName>
        <fullName evidence="1">Eukaryotic translation initiation factor 3 subunit B</fullName>
        <shortName evidence="1">eIF3b</shortName>
    </recommendedName>
    <alternativeName>
        <fullName evidence="1">Eukaryotic translation initiation factor 3 90 kDa subunit homolog</fullName>
        <shortName evidence="1">eIF3 p90</shortName>
    </alternativeName>
    <alternativeName>
        <fullName>Translation initiation factor eIF3 p90 subunit homolog</fullName>
    </alternativeName>
</protein>
<gene>
    <name type="primary">prt1</name>
    <name type="ORF">AN0359</name>
</gene>
<reference key="1">
    <citation type="journal article" date="2005" name="Nature">
        <title>Sequencing of Aspergillus nidulans and comparative analysis with A. fumigatus and A. oryzae.</title>
        <authorList>
            <person name="Galagan J.E."/>
            <person name="Calvo S.E."/>
            <person name="Cuomo C."/>
            <person name="Ma L.-J."/>
            <person name="Wortman J.R."/>
            <person name="Batzoglou S."/>
            <person name="Lee S.-I."/>
            <person name="Bastuerkmen M."/>
            <person name="Spevak C.C."/>
            <person name="Clutterbuck J."/>
            <person name="Kapitonov V."/>
            <person name="Jurka J."/>
            <person name="Scazzocchio C."/>
            <person name="Farman M.L."/>
            <person name="Butler J."/>
            <person name="Purcell S."/>
            <person name="Harris S."/>
            <person name="Braus G.H."/>
            <person name="Draht O."/>
            <person name="Busch S."/>
            <person name="D'Enfert C."/>
            <person name="Bouchier C."/>
            <person name="Goldman G.H."/>
            <person name="Bell-Pedersen D."/>
            <person name="Griffiths-Jones S."/>
            <person name="Doonan J.H."/>
            <person name="Yu J."/>
            <person name="Vienken K."/>
            <person name="Pain A."/>
            <person name="Freitag M."/>
            <person name="Selker E.U."/>
            <person name="Archer D.B."/>
            <person name="Penalva M.A."/>
            <person name="Oakley B.R."/>
            <person name="Momany M."/>
            <person name="Tanaka T."/>
            <person name="Kumagai T."/>
            <person name="Asai K."/>
            <person name="Machida M."/>
            <person name="Nierman W.C."/>
            <person name="Denning D.W."/>
            <person name="Caddick M.X."/>
            <person name="Hynes M."/>
            <person name="Paoletti M."/>
            <person name="Fischer R."/>
            <person name="Miller B.L."/>
            <person name="Dyer P.S."/>
            <person name="Sachs M.S."/>
            <person name="Osmani S.A."/>
            <person name="Birren B.W."/>
        </authorList>
    </citation>
    <scope>NUCLEOTIDE SEQUENCE [LARGE SCALE GENOMIC DNA]</scope>
    <source>
        <strain>FGSC A4 / ATCC 38163 / CBS 112.46 / NRRL 194 / M139</strain>
    </source>
</reference>
<reference key="2">
    <citation type="journal article" date="2009" name="Fungal Genet. Biol.">
        <title>The 2008 update of the Aspergillus nidulans genome annotation: a community effort.</title>
        <authorList>
            <person name="Wortman J.R."/>
            <person name="Gilsenan J.M."/>
            <person name="Joardar V."/>
            <person name="Deegan J."/>
            <person name="Clutterbuck J."/>
            <person name="Andersen M.R."/>
            <person name="Archer D."/>
            <person name="Bencina M."/>
            <person name="Braus G."/>
            <person name="Coutinho P."/>
            <person name="von Dohren H."/>
            <person name="Doonan J."/>
            <person name="Driessen A.J."/>
            <person name="Durek P."/>
            <person name="Espeso E."/>
            <person name="Fekete E."/>
            <person name="Flipphi M."/>
            <person name="Estrada C.G."/>
            <person name="Geysens S."/>
            <person name="Goldman G."/>
            <person name="de Groot P.W."/>
            <person name="Hansen K."/>
            <person name="Harris S.D."/>
            <person name="Heinekamp T."/>
            <person name="Helmstaedt K."/>
            <person name="Henrissat B."/>
            <person name="Hofmann G."/>
            <person name="Homan T."/>
            <person name="Horio T."/>
            <person name="Horiuchi H."/>
            <person name="James S."/>
            <person name="Jones M."/>
            <person name="Karaffa L."/>
            <person name="Karanyi Z."/>
            <person name="Kato M."/>
            <person name="Keller N."/>
            <person name="Kelly D.E."/>
            <person name="Kiel J.A."/>
            <person name="Kim J.M."/>
            <person name="van der Klei I.J."/>
            <person name="Klis F.M."/>
            <person name="Kovalchuk A."/>
            <person name="Krasevec N."/>
            <person name="Kubicek C.P."/>
            <person name="Liu B."/>
            <person name="Maccabe A."/>
            <person name="Meyer V."/>
            <person name="Mirabito P."/>
            <person name="Miskei M."/>
            <person name="Mos M."/>
            <person name="Mullins J."/>
            <person name="Nelson D.R."/>
            <person name="Nielsen J."/>
            <person name="Oakley B.R."/>
            <person name="Osmani S.A."/>
            <person name="Pakula T."/>
            <person name="Paszewski A."/>
            <person name="Paulsen I."/>
            <person name="Pilsyk S."/>
            <person name="Pocsi I."/>
            <person name="Punt P.J."/>
            <person name="Ram A.F."/>
            <person name="Ren Q."/>
            <person name="Robellet X."/>
            <person name="Robson G."/>
            <person name="Seiboth B."/>
            <person name="van Solingen P."/>
            <person name="Specht T."/>
            <person name="Sun J."/>
            <person name="Taheri-Talesh N."/>
            <person name="Takeshita N."/>
            <person name="Ussery D."/>
            <person name="vanKuyk P.A."/>
            <person name="Visser H."/>
            <person name="van de Vondervoort P.J."/>
            <person name="de Vries R.P."/>
            <person name="Walton J."/>
            <person name="Xiang X."/>
            <person name="Xiong Y."/>
            <person name="Zeng A.P."/>
            <person name="Brandt B.W."/>
            <person name="Cornell M.J."/>
            <person name="van den Hondel C.A."/>
            <person name="Visser J."/>
            <person name="Oliver S.G."/>
            <person name="Turner G."/>
        </authorList>
    </citation>
    <scope>GENOME REANNOTATION</scope>
    <source>
        <strain>FGSC A4 / ATCC 38163 / CBS 112.46 / NRRL 194 / M139</strain>
    </source>
</reference>
<sequence length="738" mass="84234">MAPSFENLSEQDLHEEEEEEIDFSDLKAQYEVKLEEGLDTFVVIDGLPVVPEENRQKLIKFLLRKLNTVGHTSEDAVFMPLNEKNMSEGFAFVEYETAEQAVAAVKQLHGTPLDKKHTLLVNKLMDIERYGREGRIDEEYKPPNIEPFTEKEHLRSWLGDPNARDQFALYRGDKVGVFWNNKSNPPENVVDRAHWTQLFVQWSPKGTYLASVHPQGVQLWGGPTFSKQKQFPHPFVSLIEFSPGESYLTTWSARPIQVEEGHPVLTYEEDGKNIIVWDIVTGKPLRSFVSHDLAGPESEAQPKKKVQWPAFKWSADEKYVARMLQGQSISIYELPRMNLLGKTSVKIDGVMDFEWSPATVNRDGVKQYEQLLCFWTPEIGSNPARVALMSVPSKEIVRTRNLFNVSDVKLHWQSQGNFVCVKVDRHSKSKKSMATNLEIFRVREKGVPVEVVDSLKDTVINFSWEPNGARFVLITTGDASGAGAPPKTAVSFFAPEKKGVQAGNFKLVRTIEKKTSNAIYWSPKGRFVVVATVHSQSNFDLDFWDMDFEGEKNDNEKDLAANLQLMKTVDHYGVTDIEWDPTGRYVVSGASAWTHQMENGFNLHTFSGETLAENPTDKFKQFLWRPRPPTLLSKEEQKQVRKNLREYSKEFEEEDKYAVDIANTAVVEKRKRVLNEWVAWLKREKELLTEEKEAYGLPEEADQPKAAKDAPTNTEDKGETVVEEIVEEIVEESEEIIG</sequence>
<feature type="chain" id="PRO_0000363819" description="Eukaryotic translation initiation factor 3 subunit B">
    <location>
        <begin position="1"/>
        <end position="738"/>
    </location>
</feature>
<feature type="domain" description="RRM" evidence="1">
    <location>
        <begin position="40"/>
        <end position="126"/>
    </location>
</feature>
<feature type="repeat" description="WD 1">
    <location>
        <begin position="193"/>
        <end position="230"/>
    </location>
</feature>
<feature type="repeat" description="WD 2">
    <location>
        <begin position="232"/>
        <end position="289"/>
    </location>
</feature>
<feature type="repeat" description="WD 3">
    <location>
        <begin position="301"/>
        <end position="342"/>
    </location>
</feature>
<feature type="repeat" description="WD 4">
    <location>
        <begin position="454"/>
        <end position="494"/>
    </location>
</feature>
<feature type="repeat" description="WD 5">
    <location>
        <begin position="511"/>
        <end position="554"/>
    </location>
</feature>
<feature type="repeat" description="WD 6">
    <location>
        <begin position="569"/>
        <end position="607"/>
    </location>
</feature>
<feature type="region of interest" description="Disordered" evidence="2">
    <location>
        <begin position="1"/>
        <end position="20"/>
    </location>
</feature>
<feature type="region of interest" description="Disordered" evidence="2">
    <location>
        <begin position="693"/>
        <end position="720"/>
    </location>
</feature>
<feature type="compositionally biased region" description="Polar residues" evidence="2">
    <location>
        <begin position="1"/>
        <end position="10"/>
    </location>
</feature>
<feature type="compositionally biased region" description="Basic and acidic residues" evidence="2">
    <location>
        <begin position="702"/>
        <end position="720"/>
    </location>
</feature>
<name>EIF3B_EMENI</name>
<dbReference type="EMBL" id="AACD01000006">
    <property type="protein sequence ID" value="EAA65765.1"/>
    <property type="molecule type" value="Genomic_DNA"/>
</dbReference>
<dbReference type="EMBL" id="BN001308">
    <property type="protein sequence ID" value="CBF89646.1"/>
    <property type="molecule type" value="Genomic_DNA"/>
</dbReference>
<dbReference type="RefSeq" id="XP_657963.1">
    <property type="nucleotide sequence ID" value="XM_652871.1"/>
</dbReference>
<dbReference type="SMR" id="Q5BGH1"/>
<dbReference type="FunCoup" id="Q5BGH1">
    <property type="interactions" value="1316"/>
</dbReference>
<dbReference type="STRING" id="227321.Q5BGH1"/>
<dbReference type="EnsemblFungi" id="CBF89646">
    <property type="protein sequence ID" value="CBF89646"/>
    <property type="gene ID" value="ANIA_00359"/>
</dbReference>
<dbReference type="KEGG" id="ani:ANIA_00359"/>
<dbReference type="VEuPathDB" id="FungiDB:AN0359"/>
<dbReference type="eggNOG" id="KOG2314">
    <property type="taxonomic scope" value="Eukaryota"/>
</dbReference>
<dbReference type="HOGENOM" id="CLU_011152_4_0_1"/>
<dbReference type="InParanoid" id="Q5BGH1"/>
<dbReference type="OMA" id="LWGGPQF"/>
<dbReference type="OrthoDB" id="10250414at2759"/>
<dbReference type="Proteomes" id="UP000000560">
    <property type="component" value="Chromosome VIII"/>
</dbReference>
<dbReference type="GO" id="GO:0010494">
    <property type="term" value="C:cytoplasmic stress granule"/>
    <property type="evidence" value="ECO:0007669"/>
    <property type="project" value="EnsemblFungi"/>
</dbReference>
<dbReference type="GO" id="GO:0016282">
    <property type="term" value="C:eukaryotic 43S preinitiation complex"/>
    <property type="evidence" value="ECO:0007669"/>
    <property type="project" value="UniProtKB-UniRule"/>
</dbReference>
<dbReference type="GO" id="GO:0033290">
    <property type="term" value="C:eukaryotic 48S preinitiation complex"/>
    <property type="evidence" value="ECO:0007669"/>
    <property type="project" value="UniProtKB-UniRule"/>
</dbReference>
<dbReference type="GO" id="GO:0005852">
    <property type="term" value="C:eukaryotic translation initiation factor 3 complex"/>
    <property type="evidence" value="ECO:0000318"/>
    <property type="project" value="GO_Central"/>
</dbReference>
<dbReference type="GO" id="GO:0071540">
    <property type="term" value="C:eukaryotic translation initiation factor 3 complex, eIF3e"/>
    <property type="evidence" value="ECO:0007669"/>
    <property type="project" value="EnsemblFungi"/>
</dbReference>
<dbReference type="GO" id="GO:0071541">
    <property type="term" value="C:eukaryotic translation initiation factor 3 complex, eIF3m"/>
    <property type="evidence" value="ECO:0007669"/>
    <property type="project" value="EnsemblFungi"/>
</dbReference>
<dbReference type="GO" id="GO:0043614">
    <property type="term" value="C:multi-eIF complex"/>
    <property type="evidence" value="ECO:0007669"/>
    <property type="project" value="EnsemblFungi"/>
</dbReference>
<dbReference type="GO" id="GO:0042802">
    <property type="term" value="F:identical protein binding"/>
    <property type="evidence" value="ECO:0007669"/>
    <property type="project" value="EnsemblFungi"/>
</dbReference>
<dbReference type="GO" id="GO:0003723">
    <property type="term" value="F:RNA binding"/>
    <property type="evidence" value="ECO:0007669"/>
    <property type="project" value="UniProtKB-UniRule"/>
</dbReference>
<dbReference type="GO" id="GO:0003743">
    <property type="term" value="F:translation initiation factor activity"/>
    <property type="evidence" value="ECO:0007669"/>
    <property type="project" value="UniProtKB-UniRule"/>
</dbReference>
<dbReference type="GO" id="GO:0031369">
    <property type="term" value="F:translation initiation factor binding"/>
    <property type="evidence" value="ECO:0007669"/>
    <property type="project" value="InterPro"/>
</dbReference>
<dbReference type="GO" id="GO:0001732">
    <property type="term" value="P:formation of cytoplasmic translation initiation complex"/>
    <property type="evidence" value="ECO:0007669"/>
    <property type="project" value="UniProtKB-UniRule"/>
</dbReference>
<dbReference type="GO" id="GO:0009847">
    <property type="term" value="P:spore germination"/>
    <property type="evidence" value="ECO:0000315"/>
    <property type="project" value="AspGD"/>
</dbReference>
<dbReference type="GO" id="GO:0006413">
    <property type="term" value="P:translational initiation"/>
    <property type="evidence" value="ECO:0000318"/>
    <property type="project" value="GO_Central"/>
</dbReference>
<dbReference type="CDD" id="cd12278">
    <property type="entry name" value="RRM_eIF3B"/>
    <property type="match status" value="1"/>
</dbReference>
<dbReference type="FunFam" id="2.130.10.10:FF:000419">
    <property type="entry name" value="Eukaryotic translation initiation factor 3 subunit B"/>
    <property type="match status" value="1"/>
</dbReference>
<dbReference type="FunFam" id="3.30.70.330:FF:000235">
    <property type="entry name" value="Eukaryotic translation initiation factor 3 subunit B"/>
    <property type="match status" value="1"/>
</dbReference>
<dbReference type="Gene3D" id="3.30.70.330">
    <property type="match status" value="1"/>
</dbReference>
<dbReference type="Gene3D" id="2.130.10.10">
    <property type="entry name" value="YVTN repeat-like/Quinoprotein amine dehydrogenase"/>
    <property type="match status" value="2"/>
</dbReference>
<dbReference type="HAMAP" id="MF_03001">
    <property type="entry name" value="eIF3b"/>
    <property type="match status" value="1"/>
</dbReference>
<dbReference type="InterPro" id="IPR011400">
    <property type="entry name" value="EIF3B"/>
</dbReference>
<dbReference type="InterPro" id="IPR034363">
    <property type="entry name" value="eIF3B_RRM"/>
</dbReference>
<dbReference type="InterPro" id="IPR012677">
    <property type="entry name" value="Nucleotide-bd_a/b_plait_sf"/>
</dbReference>
<dbReference type="InterPro" id="IPR035979">
    <property type="entry name" value="RBD_domain_sf"/>
</dbReference>
<dbReference type="InterPro" id="IPR000504">
    <property type="entry name" value="RRM_dom"/>
</dbReference>
<dbReference type="InterPro" id="IPR013979">
    <property type="entry name" value="TIF_beta_prop-like"/>
</dbReference>
<dbReference type="InterPro" id="IPR015943">
    <property type="entry name" value="WD40/YVTN_repeat-like_dom_sf"/>
</dbReference>
<dbReference type="PANTHER" id="PTHR14068">
    <property type="entry name" value="EUKARYOTIC TRANSLATION INITIATION FACTOR 3 EIF3 -RELATED"/>
    <property type="match status" value="1"/>
</dbReference>
<dbReference type="PANTHER" id="PTHR14068:SF0">
    <property type="entry name" value="EUKARYOTIC TRANSLATION INITIATION FACTOR 3 SUBUNIT B"/>
    <property type="match status" value="1"/>
</dbReference>
<dbReference type="Pfam" id="PF08662">
    <property type="entry name" value="eIF2A"/>
    <property type="match status" value="1"/>
</dbReference>
<dbReference type="Pfam" id="PF00076">
    <property type="entry name" value="RRM_1"/>
    <property type="match status" value="1"/>
</dbReference>
<dbReference type="PIRSF" id="PIRSF036424">
    <property type="entry name" value="eIF3b"/>
    <property type="match status" value="1"/>
</dbReference>
<dbReference type="SMART" id="SM00360">
    <property type="entry name" value="RRM"/>
    <property type="match status" value="1"/>
</dbReference>
<dbReference type="SUPFAM" id="SSF54928">
    <property type="entry name" value="RNA-binding domain, RBD"/>
    <property type="match status" value="1"/>
</dbReference>
<dbReference type="SUPFAM" id="SSF69322">
    <property type="entry name" value="Tricorn protease domain 2"/>
    <property type="match status" value="1"/>
</dbReference>
<dbReference type="PROSITE" id="PS50102">
    <property type="entry name" value="RRM"/>
    <property type="match status" value="1"/>
</dbReference>
<evidence type="ECO:0000255" key="1">
    <source>
        <dbReference type="HAMAP-Rule" id="MF_03001"/>
    </source>
</evidence>
<evidence type="ECO:0000256" key="2">
    <source>
        <dbReference type="SAM" id="MobiDB-lite"/>
    </source>
</evidence>
<proteinExistence type="inferred from homology"/>